<evidence type="ECO:0000255" key="1">
    <source>
        <dbReference type="HAMAP-Rule" id="MF_00412"/>
    </source>
</evidence>
<sequence length="415" mass="43745">MTVPAPSQLDLRQEVHDAARRARVAARRLASLPTTVKDRALHAAADELLAHRDQILAANAEDLNAAREADTPAAMLDRLSLNPQRVDGIAAGLRQVAGLRDPVGEVLRGYTLPNGLQLRQQRVPLGVVGMIYEGRPNVTVDAFGLTLKSGNAALLRGSSSAAKSNEALVAVLRTALVGLELPADAVQLLSAADRATVTHLIQARGLVDVVIPRGGAGLIEAVVRDAQVPTIETGVGNCHVYVHQAADLDVAERILLNSKTRRPSVCNAAETLLVDAAIAETALPRLLAALQHAGVTVHLDPDEADLRREYLSLDIAVAVVDGVDAAIAHINEYGTGHTEAIVTTNLDAAQRFTEQIDAAAVMVNASTAFTDGEQFGFGAEIGISTQKLHARGPMGLPELTSTKWIAWGAGHTRPA</sequence>
<protein>
    <recommendedName>
        <fullName evidence="1">Gamma-glutamyl phosphate reductase</fullName>
        <shortName evidence="1">GPR</shortName>
        <ecNumber evidence="1">1.2.1.41</ecNumber>
    </recommendedName>
    <alternativeName>
        <fullName evidence="1">Glutamate-5-semialdehyde dehydrogenase</fullName>
    </alternativeName>
    <alternativeName>
        <fullName evidence="1">Glutamyl-gamma-semialdehyde dehydrogenase</fullName>
        <shortName evidence="1">GSA dehydrogenase</shortName>
    </alternativeName>
</protein>
<comment type="function">
    <text evidence="1">Catalyzes the NADPH-dependent reduction of L-glutamate 5-phosphate into L-glutamate 5-semialdehyde and phosphate. The product spontaneously undergoes cyclization to form 1-pyrroline-5-carboxylate.</text>
</comment>
<comment type="catalytic activity">
    <reaction evidence="1">
        <text>L-glutamate 5-semialdehyde + phosphate + NADP(+) = L-glutamyl 5-phosphate + NADPH + H(+)</text>
        <dbReference type="Rhea" id="RHEA:19541"/>
        <dbReference type="ChEBI" id="CHEBI:15378"/>
        <dbReference type="ChEBI" id="CHEBI:43474"/>
        <dbReference type="ChEBI" id="CHEBI:57783"/>
        <dbReference type="ChEBI" id="CHEBI:58066"/>
        <dbReference type="ChEBI" id="CHEBI:58274"/>
        <dbReference type="ChEBI" id="CHEBI:58349"/>
        <dbReference type="EC" id="1.2.1.41"/>
    </reaction>
</comment>
<comment type="pathway">
    <text evidence="1">Amino-acid biosynthesis; L-proline biosynthesis; L-glutamate 5-semialdehyde from L-glutamate: step 2/2.</text>
</comment>
<comment type="subcellular location">
    <subcellularLocation>
        <location evidence="1">Cytoplasm</location>
    </subcellularLocation>
</comment>
<comment type="similarity">
    <text evidence="1">Belongs to the gamma-glutamyl phosphate reductase family.</text>
</comment>
<dbReference type="EC" id="1.2.1.41" evidence="1"/>
<dbReference type="EMBL" id="CP000611">
    <property type="protein sequence ID" value="ABQ74222.1"/>
    <property type="molecule type" value="Genomic_DNA"/>
</dbReference>
<dbReference type="RefSeq" id="WP_003412516.1">
    <property type="nucleotide sequence ID" value="NZ_CP016972.1"/>
</dbReference>
<dbReference type="SMR" id="A5U5C2"/>
<dbReference type="KEGG" id="mra:MRA_2453"/>
<dbReference type="eggNOG" id="COG0014">
    <property type="taxonomic scope" value="Bacteria"/>
</dbReference>
<dbReference type="HOGENOM" id="CLU_030231_0_0_11"/>
<dbReference type="UniPathway" id="UPA00098">
    <property type="reaction ID" value="UER00360"/>
</dbReference>
<dbReference type="Proteomes" id="UP000001988">
    <property type="component" value="Chromosome"/>
</dbReference>
<dbReference type="GO" id="GO:0005737">
    <property type="term" value="C:cytoplasm"/>
    <property type="evidence" value="ECO:0007669"/>
    <property type="project" value="UniProtKB-SubCell"/>
</dbReference>
<dbReference type="GO" id="GO:0004350">
    <property type="term" value="F:glutamate-5-semialdehyde dehydrogenase activity"/>
    <property type="evidence" value="ECO:0007669"/>
    <property type="project" value="UniProtKB-UniRule"/>
</dbReference>
<dbReference type="GO" id="GO:0050661">
    <property type="term" value="F:NADP binding"/>
    <property type="evidence" value="ECO:0007669"/>
    <property type="project" value="InterPro"/>
</dbReference>
<dbReference type="GO" id="GO:0055129">
    <property type="term" value="P:L-proline biosynthetic process"/>
    <property type="evidence" value="ECO:0007669"/>
    <property type="project" value="UniProtKB-UniRule"/>
</dbReference>
<dbReference type="CDD" id="cd07079">
    <property type="entry name" value="ALDH_F18-19_ProA-GPR"/>
    <property type="match status" value="1"/>
</dbReference>
<dbReference type="FunFam" id="3.40.309.10:FF:000006">
    <property type="entry name" value="Gamma-glutamyl phosphate reductase"/>
    <property type="match status" value="1"/>
</dbReference>
<dbReference type="Gene3D" id="3.40.605.10">
    <property type="entry name" value="Aldehyde Dehydrogenase, Chain A, domain 1"/>
    <property type="match status" value="1"/>
</dbReference>
<dbReference type="Gene3D" id="3.40.309.10">
    <property type="entry name" value="Aldehyde Dehydrogenase, Chain A, domain 2"/>
    <property type="match status" value="1"/>
</dbReference>
<dbReference type="HAMAP" id="MF_00412">
    <property type="entry name" value="ProA"/>
    <property type="match status" value="1"/>
</dbReference>
<dbReference type="InterPro" id="IPR016161">
    <property type="entry name" value="Ald_DH/histidinol_DH"/>
</dbReference>
<dbReference type="InterPro" id="IPR016163">
    <property type="entry name" value="Ald_DH_C"/>
</dbReference>
<dbReference type="InterPro" id="IPR016162">
    <property type="entry name" value="Ald_DH_N"/>
</dbReference>
<dbReference type="InterPro" id="IPR015590">
    <property type="entry name" value="Aldehyde_DH_dom"/>
</dbReference>
<dbReference type="InterPro" id="IPR020593">
    <property type="entry name" value="G-glutamylP_reductase_CS"/>
</dbReference>
<dbReference type="InterPro" id="IPR012134">
    <property type="entry name" value="Glu-5-SA_DH"/>
</dbReference>
<dbReference type="InterPro" id="IPR000965">
    <property type="entry name" value="GPR_dom"/>
</dbReference>
<dbReference type="NCBIfam" id="NF001221">
    <property type="entry name" value="PRK00197.1"/>
    <property type="match status" value="1"/>
</dbReference>
<dbReference type="NCBIfam" id="TIGR00407">
    <property type="entry name" value="proA"/>
    <property type="match status" value="1"/>
</dbReference>
<dbReference type="PANTHER" id="PTHR11063:SF8">
    <property type="entry name" value="DELTA-1-PYRROLINE-5-CARBOXYLATE SYNTHASE"/>
    <property type="match status" value="1"/>
</dbReference>
<dbReference type="PANTHER" id="PTHR11063">
    <property type="entry name" value="GLUTAMATE SEMIALDEHYDE DEHYDROGENASE"/>
    <property type="match status" value="1"/>
</dbReference>
<dbReference type="Pfam" id="PF00171">
    <property type="entry name" value="Aldedh"/>
    <property type="match status" value="2"/>
</dbReference>
<dbReference type="PIRSF" id="PIRSF000151">
    <property type="entry name" value="GPR"/>
    <property type="match status" value="1"/>
</dbReference>
<dbReference type="SUPFAM" id="SSF53720">
    <property type="entry name" value="ALDH-like"/>
    <property type="match status" value="1"/>
</dbReference>
<dbReference type="PROSITE" id="PS01223">
    <property type="entry name" value="PROA"/>
    <property type="match status" value="1"/>
</dbReference>
<accession>A5U5C2</accession>
<name>PROA_MYCTA</name>
<reference key="1">
    <citation type="journal article" date="2008" name="PLoS ONE">
        <title>Genetic basis of virulence attenuation revealed by comparative genomic analysis of Mycobacterium tuberculosis strain H37Ra versus H37Rv.</title>
        <authorList>
            <person name="Zheng H."/>
            <person name="Lu L."/>
            <person name="Wang B."/>
            <person name="Pu S."/>
            <person name="Zhang X."/>
            <person name="Zhu G."/>
            <person name="Shi W."/>
            <person name="Zhang L."/>
            <person name="Wang H."/>
            <person name="Wang S."/>
            <person name="Zhao G."/>
            <person name="Zhang Y."/>
        </authorList>
    </citation>
    <scope>NUCLEOTIDE SEQUENCE [LARGE SCALE GENOMIC DNA]</scope>
    <source>
        <strain>ATCC 25177 / H37Ra</strain>
    </source>
</reference>
<gene>
    <name evidence="1" type="primary">proA</name>
    <name type="ordered locus">MRA_2453</name>
</gene>
<organism>
    <name type="scientific">Mycobacterium tuberculosis (strain ATCC 25177 / H37Ra)</name>
    <dbReference type="NCBI Taxonomy" id="419947"/>
    <lineage>
        <taxon>Bacteria</taxon>
        <taxon>Bacillati</taxon>
        <taxon>Actinomycetota</taxon>
        <taxon>Actinomycetes</taxon>
        <taxon>Mycobacteriales</taxon>
        <taxon>Mycobacteriaceae</taxon>
        <taxon>Mycobacterium</taxon>
        <taxon>Mycobacterium tuberculosis complex</taxon>
    </lineage>
</organism>
<feature type="chain" id="PRO_1000049968" description="Gamma-glutamyl phosphate reductase">
    <location>
        <begin position="1"/>
        <end position="415"/>
    </location>
</feature>
<keyword id="KW-0028">Amino-acid biosynthesis</keyword>
<keyword id="KW-0963">Cytoplasm</keyword>
<keyword id="KW-0521">NADP</keyword>
<keyword id="KW-0560">Oxidoreductase</keyword>
<keyword id="KW-0641">Proline biosynthesis</keyword>
<keyword id="KW-1185">Reference proteome</keyword>
<proteinExistence type="inferred from homology"/>